<evidence type="ECO:0000250" key="1"/>
<evidence type="ECO:0000250" key="2">
    <source>
        <dbReference type="UniProtKB" id="A0A286R227"/>
    </source>
</evidence>
<evidence type="ECO:0000305" key="3"/>
<feature type="chain" id="PRO_0000166060" description="Nitrate reductase [NADH]">
    <location>
        <begin position="1" status="less than"/>
        <end position="160"/>
    </location>
</feature>
<feature type="binding site" evidence="2">
    <location>
        <position position="37"/>
    </location>
    <ligand>
        <name>FAD</name>
        <dbReference type="ChEBI" id="CHEBI:57692"/>
    </ligand>
</feature>
<feature type="non-terminal residue">
    <location>
        <position position="1"/>
    </location>
</feature>
<reference key="1">
    <citation type="submission" date="1993-11" db="EMBL/GenBank/DDBJ databases">
        <title>Molecular cloning and analysis winged bean and soybean bispecific constitutive NR and their NiR.</title>
        <authorList>
            <person name="Wu S."/>
            <person name="Lu Q."/>
            <person name="Kriz A.L."/>
            <person name="Harper J.E."/>
        </authorList>
    </citation>
    <scope>NUCLEOTIDE SEQUENCE [MRNA]</scope>
    <source>
        <tissue>Leaf</tissue>
    </source>
</reference>
<proteinExistence type="evidence at transcript level"/>
<comment type="function">
    <text>Nitrate reductase is a key enzyme involved in the first step of nitrate assimilation in plants, fungi and bacteria.</text>
</comment>
<comment type="catalytic activity">
    <reaction>
        <text>nitrite + NAD(+) + H2O = nitrate + NADH + H(+)</text>
        <dbReference type="Rhea" id="RHEA:17913"/>
        <dbReference type="ChEBI" id="CHEBI:15377"/>
        <dbReference type="ChEBI" id="CHEBI:15378"/>
        <dbReference type="ChEBI" id="CHEBI:16301"/>
        <dbReference type="ChEBI" id="CHEBI:17632"/>
        <dbReference type="ChEBI" id="CHEBI:57540"/>
        <dbReference type="ChEBI" id="CHEBI:57945"/>
        <dbReference type="EC" id="1.7.1.1"/>
    </reaction>
</comment>
<comment type="cofactor">
    <cofactor evidence="1">
        <name>FAD</name>
        <dbReference type="ChEBI" id="CHEBI:57692"/>
    </cofactor>
    <text evidence="1">Binds 1 FAD.</text>
</comment>
<comment type="cofactor">
    <cofactor evidence="1">
        <name>heme</name>
        <dbReference type="ChEBI" id="CHEBI:30413"/>
    </cofactor>
    <text evidence="1">Binds 1 heme group. The heme group is called cytochrome b-557.</text>
</comment>
<comment type="cofactor">
    <cofactor evidence="1">
        <name>Mo-molybdopterin</name>
        <dbReference type="ChEBI" id="CHEBI:71302"/>
    </cofactor>
    <text evidence="1">Binds 1 Mo-molybdopterin (Mo-MPT) cofactor per subunit.</text>
</comment>
<comment type="subunit">
    <text evidence="1">Homodimer.</text>
</comment>
<comment type="similarity">
    <text evidence="3">Belongs to the nitrate reductase family.</text>
</comment>
<sequence length="160" mass="17728">KGPLGHIEYTGKGNFIAHGEPKFARRLAMLAGGTGITPIYQVIQAVLKDPDDRTEMFFAVYSNKTESDILLREELDAWAKKHSDRFKVWYVVDKAGNDWAFSTGRVNESIMRVHLPGPSDALALACGPPPINSAYGWQPSLENIGYKKDDVPVFMATTQS</sequence>
<organism>
    <name type="scientific">Lotus tetragonolobus</name>
    <name type="common">Winged pea</name>
    <name type="synonym">Tetragonolobus purpureus</name>
    <dbReference type="NCBI Taxonomy" id="3868"/>
    <lineage>
        <taxon>Eukaryota</taxon>
        <taxon>Viridiplantae</taxon>
        <taxon>Streptophyta</taxon>
        <taxon>Embryophyta</taxon>
        <taxon>Tracheophyta</taxon>
        <taxon>Spermatophyta</taxon>
        <taxon>Magnoliopsida</taxon>
        <taxon>eudicotyledons</taxon>
        <taxon>Gunneridae</taxon>
        <taxon>Pentapetalae</taxon>
        <taxon>rosids</taxon>
        <taxon>fabids</taxon>
        <taxon>Fabales</taxon>
        <taxon>Fabaceae</taxon>
        <taxon>Papilionoideae</taxon>
        <taxon>50 kb inversion clade</taxon>
        <taxon>NPAAA clade</taxon>
        <taxon>Hologalegina</taxon>
        <taxon>robinioid clade</taxon>
        <taxon>Loteae</taxon>
        <taxon>Lotus</taxon>
    </lineage>
</organism>
<accession>P39882</accession>
<protein>
    <recommendedName>
        <fullName>Nitrate reductase [NADH]</fullName>
        <shortName>NR</shortName>
        <ecNumber>1.7.1.1</ecNumber>
    </recommendedName>
</protein>
<dbReference type="EC" id="1.7.1.1"/>
<dbReference type="EMBL" id="L16780">
    <property type="protein sequence ID" value="AAA80564.1"/>
    <property type="molecule type" value="mRNA"/>
</dbReference>
<dbReference type="SMR" id="P39882"/>
<dbReference type="GO" id="GO:0071949">
    <property type="term" value="F:FAD binding"/>
    <property type="evidence" value="ECO:0000250"/>
    <property type="project" value="UniProtKB"/>
</dbReference>
<dbReference type="GO" id="GO:0046872">
    <property type="term" value="F:metal ion binding"/>
    <property type="evidence" value="ECO:0007669"/>
    <property type="project" value="UniProtKB-KW"/>
</dbReference>
<dbReference type="GO" id="GO:0009703">
    <property type="term" value="F:nitrate reductase (NADH) activity"/>
    <property type="evidence" value="ECO:0007669"/>
    <property type="project" value="UniProtKB-EC"/>
</dbReference>
<dbReference type="GO" id="GO:0042128">
    <property type="term" value="P:nitrate assimilation"/>
    <property type="evidence" value="ECO:0007669"/>
    <property type="project" value="UniProtKB-KW"/>
</dbReference>
<dbReference type="GO" id="GO:0006809">
    <property type="term" value="P:nitric oxide biosynthetic process"/>
    <property type="evidence" value="ECO:0007669"/>
    <property type="project" value="TreeGrafter"/>
</dbReference>
<dbReference type="CDD" id="cd06183">
    <property type="entry name" value="cyt_b5_reduct_like"/>
    <property type="match status" value="1"/>
</dbReference>
<dbReference type="FunFam" id="3.40.50.80:FF:000025">
    <property type="entry name" value="Nitrate reductase [NADH]"/>
    <property type="match status" value="1"/>
</dbReference>
<dbReference type="Gene3D" id="3.40.50.80">
    <property type="entry name" value="Nucleotide-binding domain of ferredoxin-NADP reductase (FNR) module"/>
    <property type="match status" value="1"/>
</dbReference>
<dbReference type="InterPro" id="IPR001834">
    <property type="entry name" value="CBR-like"/>
</dbReference>
<dbReference type="InterPro" id="IPR001709">
    <property type="entry name" value="Flavoprot_Pyr_Nucl_cyt_Rdtase"/>
</dbReference>
<dbReference type="InterPro" id="IPR039261">
    <property type="entry name" value="FNR_nucleotide-bd"/>
</dbReference>
<dbReference type="InterPro" id="IPR001433">
    <property type="entry name" value="OxRdtase_FAD/NAD-bd"/>
</dbReference>
<dbReference type="PANTHER" id="PTHR19370">
    <property type="entry name" value="NADH-CYTOCHROME B5 REDUCTASE"/>
    <property type="match status" value="1"/>
</dbReference>
<dbReference type="PANTHER" id="PTHR19370:SF185">
    <property type="entry name" value="NADH-CYTOCHROME B5 REDUCTASE"/>
    <property type="match status" value="1"/>
</dbReference>
<dbReference type="Pfam" id="PF00175">
    <property type="entry name" value="NAD_binding_1"/>
    <property type="match status" value="1"/>
</dbReference>
<dbReference type="PRINTS" id="PR00406">
    <property type="entry name" value="CYTB5RDTASE"/>
</dbReference>
<dbReference type="PRINTS" id="PR00371">
    <property type="entry name" value="FPNCR"/>
</dbReference>
<dbReference type="SUPFAM" id="SSF52343">
    <property type="entry name" value="Ferredoxin reductase-like, C-terminal NADP-linked domain"/>
    <property type="match status" value="1"/>
</dbReference>
<gene>
    <name type="primary">NIA</name>
</gene>
<name>NIA_LOTTE</name>
<keyword id="KW-0274">FAD</keyword>
<keyword id="KW-0285">Flavoprotein</keyword>
<keyword id="KW-0349">Heme</keyword>
<keyword id="KW-0408">Iron</keyword>
<keyword id="KW-0479">Metal-binding</keyword>
<keyword id="KW-0500">Molybdenum</keyword>
<keyword id="KW-0520">NAD</keyword>
<keyword id="KW-0534">Nitrate assimilation</keyword>
<keyword id="KW-0560">Oxidoreductase</keyword>